<proteinExistence type="inferred from homology"/>
<comment type="function">
    <text evidence="1">Probably deamidates glutamine residues to glutamate on methyl-accepting chemotaxis receptors (MCPs), playing an important role in chemotaxis.</text>
</comment>
<comment type="catalytic activity">
    <reaction evidence="1">
        <text>L-glutaminyl-[protein] + H2O = L-glutamyl-[protein] + NH4(+)</text>
        <dbReference type="Rhea" id="RHEA:16441"/>
        <dbReference type="Rhea" id="RHEA-COMP:10207"/>
        <dbReference type="Rhea" id="RHEA-COMP:10208"/>
        <dbReference type="ChEBI" id="CHEBI:15377"/>
        <dbReference type="ChEBI" id="CHEBI:28938"/>
        <dbReference type="ChEBI" id="CHEBI:29973"/>
        <dbReference type="ChEBI" id="CHEBI:30011"/>
        <dbReference type="EC" id="3.5.1.44"/>
    </reaction>
</comment>
<comment type="similarity">
    <text evidence="1">Belongs to the CheD family.</text>
</comment>
<sequence length="159" mass="16707">MSLVTVGIGDLAVTGDPRAVIVTHGLGSCIALVAWDPGLRVGGMLHFQLPASALSPERALDAPGTFADTGIPLLFHRLYARGCRKEALVVKAAGGGSFNDRGGAFDIGRRNHAAMWRILRHARVAVVAEDVGGSRSRTVRLFLDSGRVTVQSGDQVAPL</sequence>
<name>CHED2_ANADE</name>
<reference key="1">
    <citation type="submission" date="2006-01" db="EMBL/GenBank/DDBJ databases">
        <title>Complete sequence of Anaeromyxobacter dehalogenans 2CP-C.</title>
        <authorList>
            <person name="Copeland A."/>
            <person name="Lucas S."/>
            <person name="Lapidus A."/>
            <person name="Barry K."/>
            <person name="Detter J.C."/>
            <person name="Glavina T."/>
            <person name="Hammon N."/>
            <person name="Israni S."/>
            <person name="Pitluck S."/>
            <person name="Brettin T."/>
            <person name="Bruce D."/>
            <person name="Han C."/>
            <person name="Tapia R."/>
            <person name="Gilna P."/>
            <person name="Kiss H."/>
            <person name="Schmutz J."/>
            <person name="Larimer F."/>
            <person name="Land M."/>
            <person name="Kyrpides N."/>
            <person name="Anderson I."/>
            <person name="Sanford R.A."/>
            <person name="Ritalahti K.M."/>
            <person name="Thomas H.S."/>
            <person name="Kirby J.R."/>
            <person name="Zhulin I.B."/>
            <person name="Loeffler F.E."/>
            <person name="Richardson P."/>
        </authorList>
    </citation>
    <scope>NUCLEOTIDE SEQUENCE [LARGE SCALE GENOMIC DNA]</scope>
    <source>
        <strain>2CP-C</strain>
    </source>
</reference>
<organism>
    <name type="scientific">Anaeromyxobacter dehalogenans (strain 2CP-C)</name>
    <dbReference type="NCBI Taxonomy" id="290397"/>
    <lineage>
        <taxon>Bacteria</taxon>
        <taxon>Pseudomonadati</taxon>
        <taxon>Myxococcota</taxon>
        <taxon>Myxococcia</taxon>
        <taxon>Myxococcales</taxon>
        <taxon>Cystobacterineae</taxon>
        <taxon>Anaeromyxobacteraceae</taxon>
        <taxon>Anaeromyxobacter</taxon>
    </lineage>
</organism>
<gene>
    <name evidence="1" type="primary">cheD2</name>
    <name type="ordered locus">Adeh_1372</name>
</gene>
<keyword id="KW-0145">Chemotaxis</keyword>
<keyword id="KW-0378">Hydrolase</keyword>
<keyword id="KW-1185">Reference proteome</keyword>
<evidence type="ECO:0000255" key="1">
    <source>
        <dbReference type="HAMAP-Rule" id="MF_01440"/>
    </source>
</evidence>
<protein>
    <recommendedName>
        <fullName evidence="1">Probable chemoreceptor glutamine deamidase CheD 2</fullName>
        <ecNumber evidence="1">3.5.1.44</ecNumber>
    </recommendedName>
</protein>
<accession>Q2IQR1</accession>
<feature type="chain" id="PRO_0000251001" description="Probable chemoreceptor glutamine deamidase CheD 2">
    <location>
        <begin position="1"/>
        <end position="159"/>
    </location>
</feature>
<dbReference type="EC" id="3.5.1.44" evidence="1"/>
<dbReference type="EMBL" id="CP000251">
    <property type="protein sequence ID" value="ABC81146.1"/>
    <property type="molecule type" value="Genomic_DNA"/>
</dbReference>
<dbReference type="RefSeq" id="WP_011420429.1">
    <property type="nucleotide sequence ID" value="NC_007760.1"/>
</dbReference>
<dbReference type="SMR" id="Q2IQR1"/>
<dbReference type="STRING" id="290397.Adeh_1372"/>
<dbReference type="KEGG" id="ade:Adeh_1372"/>
<dbReference type="eggNOG" id="COG1871">
    <property type="taxonomic scope" value="Bacteria"/>
</dbReference>
<dbReference type="HOGENOM" id="CLU_087854_2_0_7"/>
<dbReference type="OrthoDB" id="9807202at2"/>
<dbReference type="Proteomes" id="UP000001935">
    <property type="component" value="Chromosome"/>
</dbReference>
<dbReference type="GO" id="GO:0050568">
    <property type="term" value="F:protein-glutamine glutaminase activity"/>
    <property type="evidence" value="ECO:0007669"/>
    <property type="project" value="UniProtKB-UniRule"/>
</dbReference>
<dbReference type="GO" id="GO:0006935">
    <property type="term" value="P:chemotaxis"/>
    <property type="evidence" value="ECO:0007669"/>
    <property type="project" value="UniProtKB-UniRule"/>
</dbReference>
<dbReference type="CDD" id="cd16352">
    <property type="entry name" value="CheD"/>
    <property type="match status" value="1"/>
</dbReference>
<dbReference type="Gene3D" id="3.30.1330.200">
    <property type="match status" value="1"/>
</dbReference>
<dbReference type="HAMAP" id="MF_01440">
    <property type="entry name" value="CheD"/>
    <property type="match status" value="1"/>
</dbReference>
<dbReference type="InterPro" id="IPR038592">
    <property type="entry name" value="CheD-like_sf"/>
</dbReference>
<dbReference type="InterPro" id="IPR005659">
    <property type="entry name" value="Chemorcpt_Glu_NH3ase_CheD"/>
</dbReference>
<dbReference type="InterPro" id="IPR011324">
    <property type="entry name" value="Cytotoxic_necrot_fac-like_cat"/>
</dbReference>
<dbReference type="PANTHER" id="PTHR35147">
    <property type="entry name" value="CHEMORECEPTOR GLUTAMINE DEAMIDASE CHED-RELATED"/>
    <property type="match status" value="1"/>
</dbReference>
<dbReference type="PANTHER" id="PTHR35147:SF1">
    <property type="entry name" value="CHEMORECEPTOR GLUTAMINE DEAMIDASE CHED-RELATED"/>
    <property type="match status" value="1"/>
</dbReference>
<dbReference type="Pfam" id="PF03975">
    <property type="entry name" value="CheD"/>
    <property type="match status" value="1"/>
</dbReference>
<dbReference type="SUPFAM" id="SSF64438">
    <property type="entry name" value="CNF1/YfiH-like putative cysteine hydrolases"/>
    <property type="match status" value="1"/>
</dbReference>